<keyword id="KW-0963">Cytoplasm</keyword>
<keyword id="KW-0251">Elongation factor</keyword>
<keyword id="KW-0342">GTP-binding</keyword>
<keyword id="KW-0547">Nucleotide-binding</keyword>
<keyword id="KW-0648">Protein biosynthesis</keyword>
<name>EFG_LIMRJ</name>
<reference key="1">
    <citation type="journal article" date="2008" name="DNA Res.">
        <title>Comparative genome analysis of Lactobacillus reuteri and Lactobacillus fermentum reveal a genomic island for reuterin and cobalamin production.</title>
        <authorList>
            <person name="Morita H."/>
            <person name="Toh H."/>
            <person name="Fukuda S."/>
            <person name="Horikawa H."/>
            <person name="Oshima K."/>
            <person name="Suzuki T."/>
            <person name="Murakami M."/>
            <person name="Hisamatsu S."/>
            <person name="Kato Y."/>
            <person name="Takizawa T."/>
            <person name="Fukuoka H."/>
            <person name="Yoshimura T."/>
            <person name="Itoh K."/>
            <person name="O'Sullivan D.J."/>
            <person name="McKay L.L."/>
            <person name="Ohno H."/>
            <person name="Kikuchi J."/>
            <person name="Masaoka T."/>
            <person name="Hattori M."/>
        </authorList>
    </citation>
    <scope>NUCLEOTIDE SEQUENCE [LARGE SCALE GENOMIC DNA]</scope>
    <source>
        <strain>JCM 1112</strain>
    </source>
</reference>
<protein>
    <recommendedName>
        <fullName evidence="1">Elongation factor G</fullName>
        <shortName evidence="1">EF-G</shortName>
    </recommendedName>
</protein>
<proteinExistence type="inferred from homology"/>
<dbReference type="EMBL" id="AP007281">
    <property type="protein sequence ID" value="BAG25912.1"/>
    <property type="molecule type" value="Genomic_DNA"/>
</dbReference>
<dbReference type="RefSeq" id="WP_003664573.1">
    <property type="nucleotide sequence ID" value="NC_010609.1"/>
</dbReference>
<dbReference type="SMR" id="B2G8Y0"/>
<dbReference type="KEGG" id="lrf:LAR_1396"/>
<dbReference type="HOGENOM" id="CLU_002794_4_1_9"/>
<dbReference type="GO" id="GO:0005737">
    <property type="term" value="C:cytoplasm"/>
    <property type="evidence" value="ECO:0007669"/>
    <property type="project" value="UniProtKB-SubCell"/>
</dbReference>
<dbReference type="GO" id="GO:0005525">
    <property type="term" value="F:GTP binding"/>
    <property type="evidence" value="ECO:0007669"/>
    <property type="project" value="UniProtKB-UniRule"/>
</dbReference>
<dbReference type="GO" id="GO:0003924">
    <property type="term" value="F:GTPase activity"/>
    <property type="evidence" value="ECO:0007669"/>
    <property type="project" value="InterPro"/>
</dbReference>
<dbReference type="GO" id="GO:0003746">
    <property type="term" value="F:translation elongation factor activity"/>
    <property type="evidence" value="ECO:0007669"/>
    <property type="project" value="UniProtKB-UniRule"/>
</dbReference>
<dbReference type="GO" id="GO:0032790">
    <property type="term" value="P:ribosome disassembly"/>
    <property type="evidence" value="ECO:0007669"/>
    <property type="project" value="TreeGrafter"/>
</dbReference>
<dbReference type="CDD" id="cd01886">
    <property type="entry name" value="EF-G"/>
    <property type="match status" value="1"/>
</dbReference>
<dbReference type="CDD" id="cd16262">
    <property type="entry name" value="EFG_III"/>
    <property type="match status" value="1"/>
</dbReference>
<dbReference type="CDD" id="cd01434">
    <property type="entry name" value="EFG_mtEFG1_IV"/>
    <property type="match status" value="1"/>
</dbReference>
<dbReference type="CDD" id="cd03713">
    <property type="entry name" value="EFG_mtEFG_C"/>
    <property type="match status" value="1"/>
</dbReference>
<dbReference type="CDD" id="cd04088">
    <property type="entry name" value="EFG_mtEFG_II"/>
    <property type="match status" value="1"/>
</dbReference>
<dbReference type="FunFam" id="2.40.30.10:FF:000006">
    <property type="entry name" value="Elongation factor G"/>
    <property type="match status" value="1"/>
</dbReference>
<dbReference type="FunFam" id="3.30.230.10:FF:000003">
    <property type="entry name" value="Elongation factor G"/>
    <property type="match status" value="1"/>
</dbReference>
<dbReference type="FunFam" id="3.30.70.240:FF:000001">
    <property type="entry name" value="Elongation factor G"/>
    <property type="match status" value="1"/>
</dbReference>
<dbReference type="FunFam" id="3.30.70.870:FF:000001">
    <property type="entry name" value="Elongation factor G"/>
    <property type="match status" value="1"/>
</dbReference>
<dbReference type="FunFam" id="3.40.50.300:FF:000029">
    <property type="entry name" value="Elongation factor G"/>
    <property type="match status" value="1"/>
</dbReference>
<dbReference type="Gene3D" id="3.30.230.10">
    <property type="match status" value="1"/>
</dbReference>
<dbReference type="Gene3D" id="3.30.70.240">
    <property type="match status" value="1"/>
</dbReference>
<dbReference type="Gene3D" id="3.30.70.870">
    <property type="entry name" value="Elongation Factor G (Translational Gtpase), domain 3"/>
    <property type="match status" value="1"/>
</dbReference>
<dbReference type="Gene3D" id="3.40.50.300">
    <property type="entry name" value="P-loop containing nucleotide triphosphate hydrolases"/>
    <property type="match status" value="1"/>
</dbReference>
<dbReference type="Gene3D" id="2.40.30.10">
    <property type="entry name" value="Translation factors"/>
    <property type="match status" value="1"/>
</dbReference>
<dbReference type="HAMAP" id="MF_00054_B">
    <property type="entry name" value="EF_G_EF_2_B"/>
    <property type="match status" value="1"/>
</dbReference>
<dbReference type="InterPro" id="IPR053905">
    <property type="entry name" value="EF-G-like_DII"/>
</dbReference>
<dbReference type="InterPro" id="IPR041095">
    <property type="entry name" value="EFG_II"/>
</dbReference>
<dbReference type="InterPro" id="IPR009022">
    <property type="entry name" value="EFG_III"/>
</dbReference>
<dbReference type="InterPro" id="IPR035647">
    <property type="entry name" value="EFG_III/V"/>
</dbReference>
<dbReference type="InterPro" id="IPR047872">
    <property type="entry name" value="EFG_IV"/>
</dbReference>
<dbReference type="InterPro" id="IPR035649">
    <property type="entry name" value="EFG_V"/>
</dbReference>
<dbReference type="InterPro" id="IPR000640">
    <property type="entry name" value="EFG_V-like"/>
</dbReference>
<dbReference type="InterPro" id="IPR031157">
    <property type="entry name" value="G_TR_CS"/>
</dbReference>
<dbReference type="InterPro" id="IPR027417">
    <property type="entry name" value="P-loop_NTPase"/>
</dbReference>
<dbReference type="InterPro" id="IPR020568">
    <property type="entry name" value="Ribosomal_Su5_D2-typ_SF"/>
</dbReference>
<dbReference type="InterPro" id="IPR014721">
    <property type="entry name" value="Ribsml_uS5_D2-typ_fold_subgr"/>
</dbReference>
<dbReference type="InterPro" id="IPR005225">
    <property type="entry name" value="Small_GTP-bd"/>
</dbReference>
<dbReference type="InterPro" id="IPR000795">
    <property type="entry name" value="T_Tr_GTP-bd_dom"/>
</dbReference>
<dbReference type="InterPro" id="IPR009000">
    <property type="entry name" value="Transl_B-barrel_sf"/>
</dbReference>
<dbReference type="InterPro" id="IPR004540">
    <property type="entry name" value="Transl_elong_EFG/EF2"/>
</dbReference>
<dbReference type="InterPro" id="IPR005517">
    <property type="entry name" value="Transl_elong_EFG/EF2_IV"/>
</dbReference>
<dbReference type="NCBIfam" id="TIGR00484">
    <property type="entry name" value="EF-G"/>
    <property type="match status" value="1"/>
</dbReference>
<dbReference type="NCBIfam" id="NF009379">
    <property type="entry name" value="PRK12740.1-3"/>
    <property type="match status" value="1"/>
</dbReference>
<dbReference type="NCBIfam" id="NF009381">
    <property type="entry name" value="PRK12740.1-5"/>
    <property type="match status" value="1"/>
</dbReference>
<dbReference type="NCBIfam" id="NF009891">
    <property type="entry name" value="PRK13351.1-1"/>
    <property type="match status" value="1"/>
</dbReference>
<dbReference type="NCBIfam" id="TIGR00231">
    <property type="entry name" value="small_GTP"/>
    <property type="match status" value="1"/>
</dbReference>
<dbReference type="PANTHER" id="PTHR43261:SF1">
    <property type="entry name" value="RIBOSOME-RELEASING FACTOR 2, MITOCHONDRIAL"/>
    <property type="match status" value="1"/>
</dbReference>
<dbReference type="PANTHER" id="PTHR43261">
    <property type="entry name" value="TRANSLATION ELONGATION FACTOR G-RELATED"/>
    <property type="match status" value="1"/>
</dbReference>
<dbReference type="Pfam" id="PF22042">
    <property type="entry name" value="EF-G_D2"/>
    <property type="match status" value="1"/>
</dbReference>
<dbReference type="Pfam" id="PF00679">
    <property type="entry name" value="EFG_C"/>
    <property type="match status" value="1"/>
</dbReference>
<dbReference type="Pfam" id="PF14492">
    <property type="entry name" value="EFG_III"/>
    <property type="match status" value="1"/>
</dbReference>
<dbReference type="Pfam" id="PF03764">
    <property type="entry name" value="EFG_IV"/>
    <property type="match status" value="1"/>
</dbReference>
<dbReference type="Pfam" id="PF00009">
    <property type="entry name" value="GTP_EFTU"/>
    <property type="match status" value="1"/>
</dbReference>
<dbReference type="PRINTS" id="PR00315">
    <property type="entry name" value="ELONGATNFCT"/>
</dbReference>
<dbReference type="SMART" id="SM00838">
    <property type="entry name" value="EFG_C"/>
    <property type="match status" value="1"/>
</dbReference>
<dbReference type="SMART" id="SM00889">
    <property type="entry name" value="EFG_IV"/>
    <property type="match status" value="1"/>
</dbReference>
<dbReference type="SUPFAM" id="SSF54980">
    <property type="entry name" value="EF-G C-terminal domain-like"/>
    <property type="match status" value="2"/>
</dbReference>
<dbReference type="SUPFAM" id="SSF52540">
    <property type="entry name" value="P-loop containing nucleoside triphosphate hydrolases"/>
    <property type="match status" value="1"/>
</dbReference>
<dbReference type="SUPFAM" id="SSF54211">
    <property type="entry name" value="Ribosomal protein S5 domain 2-like"/>
    <property type="match status" value="1"/>
</dbReference>
<dbReference type="SUPFAM" id="SSF50447">
    <property type="entry name" value="Translation proteins"/>
    <property type="match status" value="1"/>
</dbReference>
<dbReference type="PROSITE" id="PS00301">
    <property type="entry name" value="G_TR_1"/>
    <property type="match status" value="1"/>
</dbReference>
<dbReference type="PROSITE" id="PS51722">
    <property type="entry name" value="G_TR_2"/>
    <property type="match status" value="1"/>
</dbReference>
<feature type="chain" id="PRO_1000091727" description="Elongation factor G">
    <location>
        <begin position="1"/>
        <end position="695"/>
    </location>
</feature>
<feature type="domain" description="tr-type G">
    <location>
        <begin position="10"/>
        <end position="285"/>
    </location>
</feature>
<feature type="binding site" evidence="1">
    <location>
        <begin position="19"/>
        <end position="26"/>
    </location>
    <ligand>
        <name>GTP</name>
        <dbReference type="ChEBI" id="CHEBI:37565"/>
    </ligand>
</feature>
<feature type="binding site" evidence="1">
    <location>
        <begin position="83"/>
        <end position="87"/>
    </location>
    <ligand>
        <name>GTP</name>
        <dbReference type="ChEBI" id="CHEBI:37565"/>
    </ligand>
</feature>
<feature type="binding site" evidence="1">
    <location>
        <begin position="137"/>
        <end position="140"/>
    </location>
    <ligand>
        <name>GTP</name>
        <dbReference type="ChEBI" id="CHEBI:37565"/>
    </ligand>
</feature>
<sequence>MANKREYPLAKTRNIGIMAHIDAGKTTATERILYYTGKIHKIGETHDGASQMDWMDEEKERGITITSAATTAVWKDNRINIIDTPGHVDFTVEVERALRVLDGAVTVLDAQAGVEPQTETVWRQADQFNVPRIVFANKMDKIGANFDYSVQTIKDRLNVTPLPIQMPIGAEDDFIGLVDLVKMVAYVYDEDKLGTNWDTVEIPDDMKEEAQKRHDEMVETLADIDDNLMEKYLEGEEISVDEIKAAIRKGTLEEQIFPVLAGSAYKDKGIQMMLDAVIDYLPSPIDVKPFVAHDADGNEIELTAGDDKPFAALAFKIATDPFVGRLTFLRVYTGSLQSGSYVLNATKDKRERIGRLLQMHSNQQQEIPEVFSGDIAAAIGLKNTTTGDSLTDPDHPLQLESMDFPEPVIQVSVEPKSKADQDKMDKGLQKLAEEDPTFKAETNPETGETLIAGMGELHLDIIVERLRREFHAEVTVGKPQVSYREAFTKTASAQGKFVRQSGGKGQYGDVWIEFTPLKEGEGFEFEDAIVGGVVPREFIPAVEQGLKEAMQNGVLAGYPLVDMHAKLYDGSYHEVDSSEAAFKVAASLALKNAAKKADPVILEPIMKVDIVVPQDNMGDVMGQVTARRGTIDGMEERGNAQLIHSFVPLSEMFGYATALRSATQGRGTFTMTFDHYSAVPKSVQEDIIKKNGGNN</sequence>
<comment type="function">
    <text evidence="1">Catalyzes the GTP-dependent ribosomal translocation step during translation elongation. During this step, the ribosome changes from the pre-translocational (PRE) to the post-translocational (POST) state as the newly formed A-site-bound peptidyl-tRNA and P-site-bound deacylated tRNA move to the P and E sites, respectively. Catalyzes the coordinated movement of the two tRNA molecules, the mRNA and conformational changes in the ribosome.</text>
</comment>
<comment type="subcellular location">
    <subcellularLocation>
        <location evidence="1">Cytoplasm</location>
    </subcellularLocation>
</comment>
<comment type="similarity">
    <text evidence="1">Belongs to the TRAFAC class translation factor GTPase superfamily. Classic translation factor GTPase family. EF-G/EF-2 subfamily.</text>
</comment>
<gene>
    <name evidence="1" type="primary">fusA</name>
    <name type="ordered locus">LAR_1396</name>
</gene>
<accession>B2G8Y0</accession>
<organism>
    <name type="scientific">Limosilactobacillus reuteri subsp. reuteri (strain JCM 1112)</name>
    <name type="common">Lactobacillus reuteri</name>
    <dbReference type="NCBI Taxonomy" id="557433"/>
    <lineage>
        <taxon>Bacteria</taxon>
        <taxon>Bacillati</taxon>
        <taxon>Bacillota</taxon>
        <taxon>Bacilli</taxon>
        <taxon>Lactobacillales</taxon>
        <taxon>Lactobacillaceae</taxon>
        <taxon>Limosilactobacillus</taxon>
    </lineage>
</organism>
<evidence type="ECO:0000255" key="1">
    <source>
        <dbReference type="HAMAP-Rule" id="MF_00054"/>
    </source>
</evidence>